<proteinExistence type="inferred from homology"/>
<comment type="function">
    <text evidence="1">Catalyzes the attachment of isoleucine to tRNA(Ile). As IleRS can inadvertently accommodate and process structurally similar amino acids such as valine, to avoid such errors it has two additional distinct tRNA(Ile)-dependent editing activities. One activity is designated as 'pretransfer' editing and involves the hydrolysis of activated Val-AMP. The other activity is designated 'posttransfer' editing and involves deacylation of mischarged Val-tRNA(Ile).</text>
</comment>
<comment type="catalytic activity">
    <reaction evidence="1">
        <text>tRNA(Ile) + L-isoleucine + ATP = L-isoleucyl-tRNA(Ile) + AMP + diphosphate</text>
        <dbReference type="Rhea" id="RHEA:11060"/>
        <dbReference type="Rhea" id="RHEA-COMP:9666"/>
        <dbReference type="Rhea" id="RHEA-COMP:9695"/>
        <dbReference type="ChEBI" id="CHEBI:30616"/>
        <dbReference type="ChEBI" id="CHEBI:33019"/>
        <dbReference type="ChEBI" id="CHEBI:58045"/>
        <dbReference type="ChEBI" id="CHEBI:78442"/>
        <dbReference type="ChEBI" id="CHEBI:78528"/>
        <dbReference type="ChEBI" id="CHEBI:456215"/>
        <dbReference type="EC" id="6.1.1.5"/>
    </reaction>
</comment>
<comment type="cofactor">
    <cofactor evidence="1">
        <name>Zn(2+)</name>
        <dbReference type="ChEBI" id="CHEBI:29105"/>
    </cofactor>
    <text evidence="1">Binds 1 zinc ion per subunit.</text>
</comment>
<comment type="subunit">
    <text evidence="1">Monomer.</text>
</comment>
<comment type="subcellular location">
    <subcellularLocation>
        <location evidence="1">Cytoplasm</location>
    </subcellularLocation>
</comment>
<comment type="domain">
    <text evidence="1">IleRS has two distinct active sites: one for aminoacylation and one for editing. The misactivated valine is translocated from the active site to the editing site, which sterically excludes the correctly activated isoleucine. The single editing site contains two valyl binding pockets, one specific for each substrate (Val-AMP or Val-tRNA(Ile)).</text>
</comment>
<comment type="similarity">
    <text evidence="1">Belongs to the class-I aminoacyl-tRNA synthetase family. IleS type 1 subfamily.</text>
</comment>
<dbReference type="EC" id="6.1.1.5" evidence="1"/>
<dbReference type="EMBL" id="BA000033">
    <property type="protein sequence ID" value="BAB94941.1"/>
    <property type="molecule type" value="Genomic_DNA"/>
</dbReference>
<dbReference type="RefSeq" id="WP_000384677.1">
    <property type="nucleotide sequence ID" value="NC_003923.1"/>
</dbReference>
<dbReference type="SMR" id="Q8NX29"/>
<dbReference type="KEGG" id="sam:MW1076"/>
<dbReference type="HOGENOM" id="CLU_001493_7_1_9"/>
<dbReference type="GO" id="GO:0005829">
    <property type="term" value="C:cytosol"/>
    <property type="evidence" value="ECO:0007669"/>
    <property type="project" value="TreeGrafter"/>
</dbReference>
<dbReference type="GO" id="GO:0002161">
    <property type="term" value="F:aminoacyl-tRNA deacylase activity"/>
    <property type="evidence" value="ECO:0007669"/>
    <property type="project" value="InterPro"/>
</dbReference>
<dbReference type="GO" id="GO:0005524">
    <property type="term" value="F:ATP binding"/>
    <property type="evidence" value="ECO:0007669"/>
    <property type="project" value="UniProtKB-UniRule"/>
</dbReference>
<dbReference type="GO" id="GO:0004822">
    <property type="term" value="F:isoleucine-tRNA ligase activity"/>
    <property type="evidence" value="ECO:0007669"/>
    <property type="project" value="UniProtKB-UniRule"/>
</dbReference>
<dbReference type="GO" id="GO:0000049">
    <property type="term" value="F:tRNA binding"/>
    <property type="evidence" value="ECO:0007669"/>
    <property type="project" value="InterPro"/>
</dbReference>
<dbReference type="GO" id="GO:0008270">
    <property type="term" value="F:zinc ion binding"/>
    <property type="evidence" value="ECO:0007669"/>
    <property type="project" value="UniProtKB-UniRule"/>
</dbReference>
<dbReference type="GO" id="GO:0006428">
    <property type="term" value="P:isoleucyl-tRNA aminoacylation"/>
    <property type="evidence" value="ECO:0007669"/>
    <property type="project" value="UniProtKB-UniRule"/>
</dbReference>
<dbReference type="CDD" id="cd07960">
    <property type="entry name" value="Anticodon_Ia_Ile_BEm"/>
    <property type="match status" value="1"/>
</dbReference>
<dbReference type="CDD" id="cd00818">
    <property type="entry name" value="IleRS_core"/>
    <property type="match status" value="1"/>
</dbReference>
<dbReference type="FunFam" id="1.10.10.830:FF:000001">
    <property type="entry name" value="Isoleucine--tRNA ligase"/>
    <property type="match status" value="1"/>
</dbReference>
<dbReference type="FunFam" id="1.10.730.20:FF:000001">
    <property type="entry name" value="Isoleucine--tRNA ligase"/>
    <property type="match status" value="1"/>
</dbReference>
<dbReference type="FunFam" id="3.40.50.620:FF:000152">
    <property type="entry name" value="Isoleucine--tRNA ligase"/>
    <property type="match status" value="1"/>
</dbReference>
<dbReference type="FunFam" id="3.90.740.10:FF:000006">
    <property type="entry name" value="Isoleucine--tRNA ligase"/>
    <property type="match status" value="1"/>
</dbReference>
<dbReference type="Gene3D" id="1.10.730.20">
    <property type="match status" value="1"/>
</dbReference>
<dbReference type="Gene3D" id="3.40.50.620">
    <property type="entry name" value="HUPs"/>
    <property type="match status" value="2"/>
</dbReference>
<dbReference type="Gene3D" id="1.10.10.830">
    <property type="entry name" value="Ile-tRNA synthetase CP2 domain-like"/>
    <property type="match status" value="1"/>
</dbReference>
<dbReference type="HAMAP" id="MF_02002">
    <property type="entry name" value="Ile_tRNA_synth_type1"/>
    <property type="match status" value="1"/>
</dbReference>
<dbReference type="InterPro" id="IPR001412">
    <property type="entry name" value="aa-tRNA-synth_I_CS"/>
</dbReference>
<dbReference type="InterPro" id="IPR002300">
    <property type="entry name" value="aa-tRNA-synth_Ia"/>
</dbReference>
<dbReference type="InterPro" id="IPR033708">
    <property type="entry name" value="Anticodon_Ile_BEm"/>
</dbReference>
<dbReference type="InterPro" id="IPR002301">
    <property type="entry name" value="Ile-tRNA-ligase"/>
</dbReference>
<dbReference type="InterPro" id="IPR023585">
    <property type="entry name" value="Ile-tRNA-ligase_type1"/>
</dbReference>
<dbReference type="InterPro" id="IPR050081">
    <property type="entry name" value="Ile-tRNA_ligase"/>
</dbReference>
<dbReference type="InterPro" id="IPR013155">
    <property type="entry name" value="M/V/L/I-tRNA-synth_anticd-bd"/>
</dbReference>
<dbReference type="InterPro" id="IPR014729">
    <property type="entry name" value="Rossmann-like_a/b/a_fold"/>
</dbReference>
<dbReference type="InterPro" id="IPR009080">
    <property type="entry name" value="tRNAsynth_Ia_anticodon-bd"/>
</dbReference>
<dbReference type="InterPro" id="IPR009008">
    <property type="entry name" value="Val/Leu/Ile-tRNA-synth_edit"/>
</dbReference>
<dbReference type="InterPro" id="IPR010663">
    <property type="entry name" value="Znf_FPG/IleRS"/>
</dbReference>
<dbReference type="NCBIfam" id="TIGR00392">
    <property type="entry name" value="ileS"/>
    <property type="match status" value="1"/>
</dbReference>
<dbReference type="PANTHER" id="PTHR42765:SF1">
    <property type="entry name" value="ISOLEUCINE--TRNA LIGASE, MITOCHONDRIAL"/>
    <property type="match status" value="1"/>
</dbReference>
<dbReference type="PANTHER" id="PTHR42765">
    <property type="entry name" value="SOLEUCYL-TRNA SYNTHETASE"/>
    <property type="match status" value="1"/>
</dbReference>
<dbReference type="Pfam" id="PF08264">
    <property type="entry name" value="Anticodon_1"/>
    <property type="match status" value="1"/>
</dbReference>
<dbReference type="Pfam" id="PF00133">
    <property type="entry name" value="tRNA-synt_1"/>
    <property type="match status" value="1"/>
</dbReference>
<dbReference type="Pfam" id="PF06827">
    <property type="entry name" value="zf-FPG_IleRS"/>
    <property type="match status" value="1"/>
</dbReference>
<dbReference type="PRINTS" id="PR00984">
    <property type="entry name" value="TRNASYNTHILE"/>
</dbReference>
<dbReference type="SUPFAM" id="SSF47323">
    <property type="entry name" value="Anticodon-binding domain of a subclass of class I aminoacyl-tRNA synthetases"/>
    <property type="match status" value="1"/>
</dbReference>
<dbReference type="SUPFAM" id="SSF52374">
    <property type="entry name" value="Nucleotidylyl transferase"/>
    <property type="match status" value="1"/>
</dbReference>
<dbReference type="SUPFAM" id="SSF50677">
    <property type="entry name" value="ValRS/IleRS/LeuRS editing domain"/>
    <property type="match status" value="1"/>
</dbReference>
<dbReference type="PROSITE" id="PS00178">
    <property type="entry name" value="AA_TRNA_LIGASE_I"/>
    <property type="match status" value="1"/>
</dbReference>
<feature type="chain" id="PRO_0000098468" description="Isoleucine--tRNA ligase">
    <location>
        <begin position="1"/>
        <end position="917"/>
    </location>
</feature>
<feature type="short sequence motif" description="'HIGH' region">
    <location>
        <begin position="57"/>
        <end position="67"/>
    </location>
</feature>
<feature type="short sequence motif" description="'KMSKS' region">
    <location>
        <begin position="595"/>
        <end position="599"/>
    </location>
</feature>
<feature type="binding site" evidence="1">
    <location>
        <position position="554"/>
    </location>
    <ligand>
        <name>L-isoleucyl-5'-AMP</name>
        <dbReference type="ChEBI" id="CHEBI:178002"/>
    </ligand>
</feature>
<feature type="binding site" evidence="1">
    <location>
        <position position="598"/>
    </location>
    <ligand>
        <name>ATP</name>
        <dbReference type="ChEBI" id="CHEBI:30616"/>
    </ligand>
</feature>
<feature type="binding site" evidence="1">
    <location>
        <position position="886"/>
    </location>
    <ligand>
        <name>Zn(2+)</name>
        <dbReference type="ChEBI" id="CHEBI:29105"/>
    </ligand>
</feature>
<feature type="binding site" evidence="1">
    <location>
        <position position="889"/>
    </location>
    <ligand>
        <name>Zn(2+)</name>
        <dbReference type="ChEBI" id="CHEBI:29105"/>
    </ligand>
</feature>
<feature type="binding site" evidence="1">
    <location>
        <position position="906"/>
    </location>
    <ligand>
        <name>Zn(2+)</name>
        <dbReference type="ChEBI" id="CHEBI:29105"/>
    </ligand>
</feature>
<feature type="binding site" evidence="1">
    <location>
        <position position="909"/>
    </location>
    <ligand>
        <name>Zn(2+)</name>
        <dbReference type="ChEBI" id="CHEBI:29105"/>
    </ligand>
</feature>
<sequence length="917" mass="104891">MDYKETLLMPKTDFPMRGGLPNKEPQIQEKWDAEDQYHKALEKNKGNETFILHDGPPYANGNLHMGHALNKILKDFIVRYKTMQGFYAPYVPGWDTHGLPIEQALTKKGVDRKKMSTAEFREKCKEFALEQIELQKKDFRRLGVRGDFNDPYITLKPEYEAAQIRIFGEMADKGLIYKGKKPVYWSPSSESSLAEAEIEYHDKRSASIYVAFDVKDDKGVVDADAKFIIWTTTPWTIPSNVAITVHPELKYGQYNVDGEKYIIAEALSDAVAEALDWDKASIKLEKEYTGKELEYVVAQHPFLDRESLVINGDHVTTDAGTGCVHTAPGHGEDDYIVGQKYELPVISPIDDKGVFTEEGGQFEGMFYDKANKAVTDLLTEKGALLKLDFITHSYPHDWRTKKPVIFRATPQWFASISKVRQDILDAIENTNFKVNWGKTRIYNMVRDRGEWVISRQRVWGVPLPVFYAENGEIIMTKETVNHVADLFAEHGSNIWFEREAKDLLPEGFTHPGSPNGTFTKETDIMDVWFDSGSSHRGVLETRPELSFPADMYLEGSDQYRGWFNSSITTSVATRGVSPYKFLLSHGFVMDGEGKKMSKSLGNVIVPDQVVKQKGADIARLWVSSTDYLADVRISDEILKQTSDVYRKIRNTLRFMLGNINDFNPDTDSITESELLEVDRYLLNRLREFTASTINNYENFDYLNIYQEVQNFINVELSNFYLDYGKDILYIEQRDSHIRRSMQTVLYQILVDMTKLLAPILVHTAEEVWSHTPHVKEESVHLADMPKVVEVDQALLDKWRTFMNLRDDVNRALETARNEKVIGKSLEAKVTIASNDKFNASEFLTSFDALHQLFIVSQVKVVDKLDDQATAYEHGDIVIEHADGEKCERCWNYSEDLGAVDELTHLCPRCQQVVKSLV</sequence>
<evidence type="ECO:0000255" key="1">
    <source>
        <dbReference type="HAMAP-Rule" id="MF_02002"/>
    </source>
</evidence>
<gene>
    <name evidence="1" type="primary">ileS</name>
    <name type="ordered locus">MW1076</name>
</gene>
<keyword id="KW-0030">Aminoacyl-tRNA synthetase</keyword>
<keyword id="KW-0067">ATP-binding</keyword>
<keyword id="KW-0963">Cytoplasm</keyword>
<keyword id="KW-0436">Ligase</keyword>
<keyword id="KW-0479">Metal-binding</keyword>
<keyword id="KW-0547">Nucleotide-binding</keyword>
<keyword id="KW-0648">Protein biosynthesis</keyword>
<keyword id="KW-0862">Zinc</keyword>
<reference key="1">
    <citation type="journal article" date="2002" name="Lancet">
        <title>Genome and virulence determinants of high virulence community-acquired MRSA.</title>
        <authorList>
            <person name="Baba T."/>
            <person name="Takeuchi F."/>
            <person name="Kuroda M."/>
            <person name="Yuzawa H."/>
            <person name="Aoki K."/>
            <person name="Oguchi A."/>
            <person name="Nagai Y."/>
            <person name="Iwama N."/>
            <person name="Asano K."/>
            <person name="Naimi T."/>
            <person name="Kuroda H."/>
            <person name="Cui L."/>
            <person name="Yamamoto K."/>
            <person name="Hiramatsu K."/>
        </authorList>
    </citation>
    <scope>NUCLEOTIDE SEQUENCE [LARGE SCALE GENOMIC DNA]</scope>
    <source>
        <strain>MW2</strain>
    </source>
</reference>
<accession>Q8NX29</accession>
<name>SYI_STAAW</name>
<protein>
    <recommendedName>
        <fullName evidence="1">Isoleucine--tRNA ligase</fullName>
        <ecNumber evidence="1">6.1.1.5</ecNumber>
    </recommendedName>
    <alternativeName>
        <fullName evidence="1">Isoleucyl-tRNA synthetase</fullName>
        <shortName evidence="1">IleRS</shortName>
    </alternativeName>
</protein>
<organism>
    <name type="scientific">Staphylococcus aureus (strain MW2)</name>
    <dbReference type="NCBI Taxonomy" id="196620"/>
    <lineage>
        <taxon>Bacteria</taxon>
        <taxon>Bacillati</taxon>
        <taxon>Bacillota</taxon>
        <taxon>Bacilli</taxon>
        <taxon>Bacillales</taxon>
        <taxon>Staphylococcaceae</taxon>
        <taxon>Staphylococcus</taxon>
    </lineage>
</organism>